<proteinExistence type="inferred from homology"/>
<accession>A5E2R6</accession>
<dbReference type="EMBL" id="CH981528">
    <property type="protein sequence ID" value="EDK45724.1"/>
    <property type="molecule type" value="Genomic_DNA"/>
</dbReference>
<dbReference type="RefSeq" id="XP_001524871.1">
    <property type="nucleotide sequence ID" value="XM_001524821.1"/>
</dbReference>
<dbReference type="SMR" id="A5E2R6"/>
<dbReference type="FunCoup" id="A5E2R6">
    <property type="interactions" value="60"/>
</dbReference>
<dbReference type="STRING" id="379508.A5E2R6"/>
<dbReference type="GeneID" id="5232161"/>
<dbReference type="KEGG" id="lel:PVL30_004727"/>
<dbReference type="VEuPathDB" id="FungiDB:LELG_03903"/>
<dbReference type="eggNOG" id="KOG0645">
    <property type="taxonomic scope" value="Eukaryota"/>
</dbReference>
<dbReference type="HOGENOM" id="CLU_000288_57_8_1"/>
<dbReference type="InParanoid" id="A5E2R6"/>
<dbReference type="OMA" id="IREIRWS"/>
<dbReference type="OrthoDB" id="284782at2759"/>
<dbReference type="Proteomes" id="UP000001996">
    <property type="component" value="Unassembled WGS sequence"/>
</dbReference>
<dbReference type="GO" id="GO:0097361">
    <property type="term" value="C:cytosolic [4Fe-4S] assembly targeting complex"/>
    <property type="evidence" value="ECO:0007669"/>
    <property type="project" value="EnsemblFungi"/>
</dbReference>
<dbReference type="GO" id="GO:0005634">
    <property type="term" value="C:nucleus"/>
    <property type="evidence" value="ECO:0007669"/>
    <property type="project" value="UniProtKB-SubCell"/>
</dbReference>
<dbReference type="GO" id="GO:0016226">
    <property type="term" value="P:iron-sulfur cluster assembly"/>
    <property type="evidence" value="ECO:0007669"/>
    <property type="project" value="UniProtKB-UniRule"/>
</dbReference>
<dbReference type="GO" id="GO:0002098">
    <property type="term" value="P:tRNA wobble uridine modification"/>
    <property type="evidence" value="ECO:0007669"/>
    <property type="project" value="EnsemblFungi"/>
</dbReference>
<dbReference type="CDD" id="cd00200">
    <property type="entry name" value="WD40"/>
    <property type="match status" value="1"/>
</dbReference>
<dbReference type="Gene3D" id="2.130.10.10">
    <property type="entry name" value="YVTN repeat-like/Quinoprotein amine dehydrogenase"/>
    <property type="match status" value="1"/>
</dbReference>
<dbReference type="HAMAP" id="MF_03037">
    <property type="entry name" value="ciao1"/>
    <property type="match status" value="1"/>
</dbReference>
<dbReference type="InterPro" id="IPR028608">
    <property type="entry name" value="CIAO1/Cia1"/>
</dbReference>
<dbReference type="InterPro" id="IPR020472">
    <property type="entry name" value="G-protein_beta_WD-40_rep"/>
</dbReference>
<dbReference type="InterPro" id="IPR015943">
    <property type="entry name" value="WD40/YVTN_repeat-like_dom_sf"/>
</dbReference>
<dbReference type="InterPro" id="IPR019775">
    <property type="entry name" value="WD40_repeat_CS"/>
</dbReference>
<dbReference type="InterPro" id="IPR036322">
    <property type="entry name" value="WD40_repeat_dom_sf"/>
</dbReference>
<dbReference type="InterPro" id="IPR001680">
    <property type="entry name" value="WD40_rpt"/>
</dbReference>
<dbReference type="PANTHER" id="PTHR19920:SF0">
    <property type="entry name" value="CYTOSOLIC IRON-SULFUR PROTEIN ASSEMBLY PROTEIN CIAO1-RELATED"/>
    <property type="match status" value="1"/>
</dbReference>
<dbReference type="PANTHER" id="PTHR19920">
    <property type="entry name" value="WD40 PROTEIN CIAO1"/>
    <property type="match status" value="1"/>
</dbReference>
<dbReference type="Pfam" id="PF00400">
    <property type="entry name" value="WD40"/>
    <property type="match status" value="7"/>
</dbReference>
<dbReference type="PRINTS" id="PR00320">
    <property type="entry name" value="GPROTEINBRPT"/>
</dbReference>
<dbReference type="SMART" id="SM00320">
    <property type="entry name" value="WD40"/>
    <property type="match status" value="7"/>
</dbReference>
<dbReference type="SUPFAM" id="SSF50978">
    <property type="entry name" value="WD40 repeat-like"/>
    <property type="match status" value="1"/>
</dbReference>
<dbReference type="PROSITE" id="PS00678">
    <property type="entry name" value="WD_REPEATS_1"/>
    <property type="match status" value="2"/>
</dbReference>
<dbReference type="PROSITE" id="PS50082">
    <property type="entry name" value="WD_REPEATS_2"/>
    <property type="match status" value="4"/>
</dbReference>
<dbReference type="PROSITE" id="PS50294">
    <property type="entry name" value="WD_REPEATS_REGION"/>
    <property type="match status" value="1"/>
</dbReference>
<comment type="function">
    <text evidence="1">Essential component of the cytosolic iron-sulfur (Fe/S) protein assembly machinery. Required for the maturation of extramitochondrial Fe/S proteins.</text>
</comment>
<comment type="subunit">
    <text evidence="1">Interacts with NAR1.</text>
</comment>
<comment type="subcellular location">
    <subcellularLocation>
        <location evidence="1">Cytoplasm</location>
    </subcellularLocation>
    <subcellularLocation>
        <location evidence="1">Nucleus</location>
    </subcellularLocation>
    <text evidence="1">Preferentially localized to the nucleus.</text>
</comment>
<comment type="similarity">
    <text evidence="1">Belongs to the WD repeat CIA1 family.</text>
</comment>
<feature type="chain" id="PRO_0000382517" description="Probable cytosolic iron-sulfur protein assembly protein 1">
    <location>
        <begin position="1"/>
        <end position="415"/>
    </location>
</feature>
<feature type="repeat" description="WD 1">
    <location>
        <begin position="9"/>
        <end position="48"/>
    </location>
</feature>
<feature type="repeat" description="WD 2">
    <location>
        <begin position="79"/>
        <end position="131"/>
    </location>
</feature>
<feature type="repeat" description="WD 3">
    <location>
        <begin position="160"/>
        <end position="200"/>
    </location>
</feature>
<feature type="repeat" description="WD 4">
    <location>
        <begin position="207"/>
        <end position="246"/>
    </location>
</feature>
<feature type="repeat" description="WD 5">
    <location>
        <begin position="253"/>
        <end position="300"/>
    </location>
</feature>
<feature type="repeat" description="WD 6">
    <location>
        <begin position="335"/>
        <end position="374"/>
    </location>
</feature>
<feature type="repeat" description="WD 7">
    <location>
        <begin position="380"/>
        <end position="415"/>
    </location>
</feature>
<feature type="region of interest" description="Disordered" evidence="2">
    <location>
        <begin position="45"/>
        <end position="70"/>
    </location>
</feature>
<feature type="compositionally biased region" description="Pro residues" evidence="2">
    <location>
        <begin position="54"/>
        <end position="63"/>
    </location>
</feature>
<gene>
    <name evidence="1" type="primary">CIA1</name>
    <name type="ORF">LELG_03903</name>
</gene>
<reference key="1">
    <citation type="journal article" date="2009" name="Nature">
        <title>Evolution of pathogenicity and sexual reproduction in eight Candida genomes.</title>
        <authorList>
            <person name="Butler G."/>
            <person name="Rasmussen M.D."/>
            <person name="Lin M.F."/>
            <person name="Santos M.A.S."/>
            <person name="Sakthikumar S."/>
            <person name="Munro C.A."/>
            <person name="Rheinbay E."/>
            <person name="Grabherr M."/>
            <person name="Forche A."/>
            <person name="Reedy J.L."/>
            <person name="Agrafioti I."/>
            <person name="Arnaud M.B."/>
            <person name="Bates S."/>
            <person name="Brown A.J.P."/>
            <person name="Brunke S."/>
            <person name="Costanzo M.C."/>
            <person name="Fitzpatrick D.A."/>
            <person name="de Groot P.W.J."/>
            <person name="Harris D."/>
            <person name="Hoyer L.L."/>
            <person name="Hube B."/>
            <person name="Klis F.M."/>
            <person name="Kodira C."/>
            <person name="Lennard N."/>
            <person name="Logue M.E."/>
            <person name="Martin R."/>
            <person name="Neiman A.M."/>
            <person name="Nikolaou E."/>
            <person name="Quail M.A."/>
            <person name="Quinn J."/>
            <person name="Santos M.C."/>
            <person name="Schmitzberger F.F."/>
            <person name="Sherlock G."/>
            <person name="Shah P."/>
            <person name="Silverstein K.A.T."/>
            <person name="Skrzypek M.S."/>
            <person name="Soll D."/>
            <person name="Staggs R."/>
            <person name="Stansfield I."/>
            <person name="Stumpf M.P.H."/>
            <person name="Sudbery P.E."/>
            <person name="Srikantha T."/>
            <person name="Zeng Q."/>
            <person name="Berman J."/>
            <person name="Berriman M."/>
            <person name="Heitman J."/>
            <person name="Gow N.A.R."/>
            <person name="Lorenz M.C."/>
            <person name="Birren B.W."/>
            <person name="Kellis M."/>
            <person name="Cuomo C.A."/>
        </authorList>
    </citation>
    <scope>NUCLEOTIDE SEQUENCE [LARGE SCALE GENOMIC DNA]</scope>
    <source>
        <strain>ATCC 11503 / BCRC 21390 / CBS 2605 / JCM 1781 / NBRC 1676 / NRRL YB-4239</strain>
    </source>
</reference>
<evidence type="ECO:0000255" key="1">
    <source>
        <dbReference type="HAMAP-Rule" id="MF_03037"/>
    </source>
</evidence>
<evidence type="ECO:0000256" key="2">
    <source>
        <dbReference type="SAM" id="MobiDB-lite"/>
    </source>
</evidence>
<keyword id="KW-0963">Cytoplasm</keyword>
<keyword id="KW-0539">Nucleus</keyword>
<keyword id="KW-1185">Reference proteome</keyword>
<keyword id="KW-0677">Repeat</keyword>
<keyword id="KW-0853">WD repeat</keyword>
<protein>
    <recommendedName>
        <fullName evidence="1">Probable cytosolic iron-sulfur protein assembly protein 1</fullName>
    </recommendedName>
</protein>
<name>CIAO1_LODEL</name>
<organism>
    <name type="scientific">Lodderomyces elongisporus (strain ATCC 11503 / CBS 2605 / JCM 1781 / NBRC 1676 / NRRL YB-4239)</name>
    <name type="common">Yeast</name>
    <name type="synonym">Saccharomyces elongisporus</name>
    <dbReference type="NCBI Taxonomy" id="379508"/>
    <lineage>
        <taxon>Eukaryota</taxon>
        <taxon>Fungi</taxon>
        <taxon>Dikarya</taxon>
        <taxon>Ascomycota</taxon>
        <taxon>Saccharomycotina</taxon>
        <taxon>Pichiomycetes</taxon>
        <taxon>Debaryomycetaceae</taxon>
        <taxon>Candida/Lodderomyces clade</taxon>
        <taxon>Lodderomyces</taxon>
    </lineage>
</organism>
<sequence length="415" mass="46023">MKLLHSIKAHDDKVWSLSSHPTLPLLATASTDKCSNIYRLSCSNASSSSSSSSPPSPPSPPSSSSPRRNFPQIAHLEDTHRRSVRSVSFKPPMGGIDHQDSNILDLPALASGSFDSTISIWGIDEPDDDNTYEIEEIIANQKEFLASPGNEWNLMAVIEGHENEIKAVDWNFSGRYLASCSRDKTVWIWETDPETLEEFECVAVLTDHTQDVKHVTWHPTRNLLASSSYDDTIRVYKQEFDDDEWSCVGMIDGHEGTVWCSKFESPKSPKAKDGTTRLVSVSDDLSARVWASKDNTGFNGGSEQLQSQSQTHLPSSIRHNAEEMVWEQESTLPQIHTHAIYSVAWSSSSGKIATAGSDGRIVVYKETNAGWEVENIQESAHGVYEINCVIWAKLDLDQEVLISGGDDGNVNIWEV</sequence>